<feature type="chain" id="PRO_0000144410" description="ATP synthase subunit alpha, mitochondrial">
    <location>
        <begin position="1"/>
        <end position="509"/>
    </location>
</feature>
<feature type="binding site" evidence="1">
    <location>
        <begin position="171"/>
        <end position="178"/>
    </location>
    <ligand>
        <name>ATP</name>
        <dbReference type="ChEBI" id="CHEBI:30616"/>
    </ligand>
</feature>
<feature type="site" description="Required for activity" evidence="1">
    <location>
        <position position="373"/>
    </location>
</feature>
<evidence type="ECO:0000250" key="1"/>
<evidence type="ECO:0000305" key="2"/>
<dbReference type="EMBL" id="X15918">
    <property type="protein sequence ID" value="CAA34060.1"/>
    <property type="molecule type" value="Genomic_DNA"/>
</dbReference>
<dbReference type="PIR" id="S06007">
    <property type="entry name" value="PWWTAM"/>
</dbReference>
<dbReference type="RefSeq" id="YP_398393.1">
    <property type="nucleotide sequence ID" value="NC_007579.1"/>
</dbReference>
<dbReference type="SMR" id="P12862"/>
<dbReference type="PaxDb" id="4565-EPlTAEP00000010092"/>
<dbReference type="eggNOG" id="KOG1353">
    <property type="taxonomic scope" value="Eukaryota"/>
</dbReference>
<dbReference type="Proteomes" id="UP000019116">
    <property type="component" value="Unplaced"/>
</dbReference>
<dbReference type="GO" id="GO:0005743">
    <property type="term" value="C:mitochondrial inner membrane"/>
    <property type="evidence" value="ECO:0007669"/>
    <property type="project" value="UniProtKB-SubCell"/>
</dbReference>
<dbReference type="GO" id="GO:0045259">
    <property type="term" value="C:proton-transporting ATP synthase complex"/>
    <property type="evidence" value="ECO:0007669"/>
    <property type="project" value="UniProtKB-KW"/>
</dbReference>
<dbReference type="GO" id="GO:0005524">
    <property type="term" value="F:ATP binding"/>
    <property type="evidence" value="ECO:0007669"/>
    <property type="project" value="UniProtKB-KW"/>
</dbReference>
<dbReference type="GO" id="GO:0046933">
    <property type="term" value="F:proton-transporting ATP synthase activity, rotational mechanism"/>
    <property type="evidence" value="ECO:0007669"/>
    <property type="project" value="InterPro"/>
</dbReference>
<dbReference type="CDD" id="cd18113">
    <property type="entry name" value="ATP-synt_F1_alpha_C"/>
    <property type="match status" value="1"/>
</dbReference>
<dbReference type="CDD" id="cd18116">
    <property type="entry name" value="ATP-synt_F1_alpha_N"/>
    <property type="match status" value="1"/>
</dbReference>
<dbReference type="CDD" id="cd01132">
    <property type="entry name" value="F1-ATPase_alpha_CD"/>
    <property type="match status" value="1"/>
</dbReference>
<dbReference type="FunFam" id="1.20.150.20:FF:000001">
    <property type="entry name" value="ATP synthase subunit alpha"/>
    <property type="match status" value="1"/>
</dbReference>
<dbReference type="FunFam" id="2.40.30.20:FF:000001">
    <property type="entry name" value="ATP synthase subunit alpha"/>
    <property type="match status" value="1"/>
</dbReference>
<dbReference type="FunFam" id="3.40.50.300:FF:002432">
    <property type="entry name" value="ATP synthase subunit alpha, mitochondrial"/>
    <property type="match status" value="1"/>
</dbReference>
<dbReference type="Gene3D" id="2.40.30.20">
    <property type="match status" value="1"/>
</dbReference>
<dbReference type="Gene3D" id="1.20.150.20">
    <property type="entry name" value="ATP synthase alpha/beta chain, C-terminal domain"/>
    <property type="match status" value="1"/>
</dbReference>
<dbReference type="Gene3D" id="3.40.50.300">
    <property type="entry name" value="P-loop containing nucleotide triphosphate hydrolases"/>
    <property type="match status" value="1"/>
</dbReference>
<dbReference type="HAMAP" id="MF_01346">
    <property type="entry name" value="ATP_synth_alpha_bact"/>
    <property type="match status" value="1"/>
</dbReference>
<dbReference type="InterPro" id="IPR023366">
    <property type="entry name" value="ATP_synth_asu-like_sf"/>
</dbReference>
<dbReference type="InterPro" id="IPR000793">
    <property type="entry name" value="ATP_synth_asu_C"/>
</dbReference>
<dbReference type="InterPro" id="IPR038376">
    <property type="entry name" value="ATP_synth_asu_C_sf"/>
</dbReference>
<dbReference type="InterPro" id="IPR033732">
    <property type="entry name" value="ATP_synth_F1_a_nt-bd_dom"/>
</dbReference>
<dbReference type="InterPro" id="IPR005294">
    <property type="entry name" value="ATP_synth_F1_asu"/>
</dbReference>
<dbReference type="InterPro" id="IPR020003">
    <property type="entry name" value="ATPase_a/bsu_AS"/>
</dbReference>
<dbReference type="InterPro" id="IPR004100">
    <property type="entry name" value="ATPase_F1/V1/A1_a/bsu_N"/>
</dbReference>
<dbReference type="InterPro" id="IPR036121">
    <property type="entry name" value="ATPase_F1/V1/A1_a/bsu_N_sf"/>
</dbReference>
<dbReference type="InterPro" id="IPR000194">
    <property type="entry name" value="ATPase_F1/V1/A1_a/bsu_nucl-bd"/>
</dbReference>
<dbReference type="InterPro" id="IPR027417">
    <property type="entry name" value="P-loop_NTPase"/>
</dbReference>
<dbReference type="NCBIfam" id="TIGR00962">
    <property type="entry name" value="atpA"/>
    <property type="match status" value="1"/>
</dbReference>
<dbReference type="NCBIfam" id="NF009884">
    <property type="entry name" value="PRK13343.1"/>
    <property type="match status" value="1"/>
</dbReference>
<dbReference type="PANTHER" id="PTHR48082">
    <property type="entry name" value="ATP SYNTHASE SUBUNIT ALPHA, MITOCHONDRIAL"/>
    <property type="match status" value="1"/>
</dbReference>
<dbReference type="PANTHER" id="PTHR48082:SF2">
    <property type="entry name" value="ATP SYNTHASE SUBUNIT ALPHA, MITOCHONDRIAL"/>
    <property type="match status" value="1"/>
</dbReference>
<dbReference type="Pfam" id="PF00006">
    <property type="entry name" value="ATP-synt_ab"/>
    <property type="match status" value="1"/>
</dbReference>
<dbReference type="Pfam" id="PF00306">
    <property type="entry name" value="ATP-synt_ab_C"/>
    <property type="match status" value="1"/>
</dbReference>
<dbReference type="Pfam" id="PF02874">
    <property type="entry name" value="ATP-synt_ab_N"/>
    <property type="match status" value="1"/>
</dbReference>
<dbReference type="PIRSF" id="PIRSF039088">
    <property type="entry name" value="F_ATPase_subunit_alpha"/>
    <property type="match status" value="1"/>
</dbReference>
<dbReference type="SUPFAM" id="SSF47917">
    <property type="entry name" value="C-terminal domain of alpha and beta subunits of F1 ATP synthase"/>
    <property type="match status" value="1"/>
</dbReference>
<dbReference type="SUPFAM" id="SSF50615">
    <property type="entry name" value="N-terminal domain of alpha and beta subunits of F1 ATP synthase"/>
    <property type="match status" value="1"/>
</dbReference>
<dbReference type="SUPFAM" id="SSF52540">
    <property type="entry name" value="P-loop containing nucleoside triphosphate hydrolases"/>
    <property type="match status" value="1"/>
</dbReference>
<dbReference type="PROSITE" id="PS00152">
    <property type="entry name" value="ATPASE_ALPHA_BETA"/>
    <property type="match status" value="1"/>
</dbReference>
<gene>
    <name type="primary">ATPA</name>
</gene>
<keyword id="KW-0066">ATP synthesis</keyword>
<keyword id="KW-0067">ATP-binding</keyword>
<keyword id="KW-0139">CF(1)</keyword>
<keyword id="KW-0375">Hydrogen ion transport</keyword>
<keyword id="KW-0406">Ion transport</keyword>
<keyword id="KW-0472">Membrane</keyword>
<keyword id="KW-0496">Mitochondrion</keyword>
<keyword id="KW-0999">Mitochondrion inner membrane</keyword>
<keyword id="KW-0547">Nucleotide-binding</keyword>
<keyword id="KW-1185">Reference proteome</keyword>
<keyword id="KW-0813">Transport</keyword>
<comment type="function">
    <text evidence="1">Mitochondrial membrane ATP synthase (F(1)F(0) ATP synthase or Complex V) produces ATP from ADP in the presence of a proton gradient across the membrane which is generated by electron transport complexes of the respiratory chain. F-type ATPases consist of two structural domains, F(1) - containing the extramembraneous catalytic core, and F(0) - containing the membrane proton channel, linked together by a central stalk and a peripheral stalk. During catalysis, ATP synthesis in the catalytic domain of F(1) is coupled via a rotary mechanism of the central stalk subunits to proton translocation. Subunits alpha and beta form the catalytic core in F(1). Rotation of the central stalk against the surrounding alpha(3)beta(3) subunits leads to hydrolysis of ATP in three separate catalytic sites on the beta subunits. Subunit alpha does not bear the catalytic high-affinity ATP-binding sites (By similarity).</text>
</comment>
<comment type="subunit">
    <text>F-type ATPases have 2 components, CF(1) - the catalytic core - and CF(0) - the membrane proton channel. CF(1) has five subunits: alpha(3), beta(3), gamma(1), delta(1), epsilon(1). CF(0) has three main subunits: a, b and c.</text>
</comment>
<comment type="subcellular location">
    <subcellularLocation>
        <location>Mitochondrion</location>
    </subcellularLocation>
    <subcellularLocation>
        <location>Mitochondrion inner membrane</location>
    </subcellularLocation>
    <text>Peripheral membrane protein.</text>
</comment>
<comment type="similarity">
    <text evidence="2">Belongs to the ATPase alpha/beta chains family.</text>
</comment>
<accession>P12862</accession>
<proteinExistence type="inferred from homology"/>
<geneLocation type="mitochondrion"/>
<protein>
    <recommendedName>
        <fullName>ATP synthase subunit alpha, mitochondrial</fullName>
    </recommendedName>
</protein>
<sequence length="509" mass="55264">MEFSPRAAELTTLLESRMTNFYTNFQVDEIGRVVSVGDGIARVYGLNEIQAGEMVEFASGVKGIALNLENENVGIVVFGSDTAIKEGDLVKRTGSIVDVPAGKAMLGRVVDALGVPIDGKGALSDHERRRVEVKAPGIIERKSVHEPMQTGLKAVDSLVPIGRGQRELIIGDRQTGKTAIAIDTILNQKQMNSRGTNESETLYCVYVAIGQKRSTVAQLVQILSEANALEYSILVAATASDPAPLQFLAPYSGCAMGEYFRDNGMHALIIYDDLSKQAVAYRQMSLLLRRPPGREAFPGDVFYLHSRLLERAAKRSDQTGAGSSTALPVIETQAGDVSAYIPTNVISITDGQICLETDVFYRGIRPAINVGLSVSRVGSAAQLKAMKQVCGSSKLELAQYREVAAFAQFGSDLDAASQALLNRGARLTEVPKQPQYEPLPIEKQIVVIYAAVNGFCDRMPLDRISQYEKAILSTINPELQKSFLEKGGLTNERKMEPDASLKESTLPYL</sequence>
<organism>
    <name type="scientific">Triticum aestivum</name>
    <name type="common">Wheat</name>
    <dbReference type="NCBI Taxonomy" id="4565"/>
    <lineage>
        <taxon>Eukaryota</taxon>
        <taxon>Viridiplantae</taxon>
        <taxon>Streptophyta</taxon>
        <taxon>Embryophyta</taxon>
        <taxon>Tracheophyta</taxon>
        <taxon>Spermatophyta</taxon>
        <taxon>Magnoliopsida</taxon>
        <taxon>Liliopsida</taxon>
        <taxon>Poales</taxon>
        <taxon>Poaceae</taxon>
        <taxon>BOP clade</taxon>
        <taxon>Pooideae</taxon>
        <taxon>Triticodae</taxon>
        <taxon>Triticeae</taxon>
        <taxon>Triticinae</taxon>
        <taxon>Triticum</taxon>
    </lineage>
</organism>
<name>ATPAM_WHEAT</name>
<reference key="1">
    <citation type="journal article" date="1989" name="Nucleic Acids Res.">
        <title>Wheat mitochondrial DNA: organization and sequences of the atpA and atp9 genes.</title>
        <authorList>
            <person name="Schulte E."/>
            <person name="Staubach S."/>
            <person name="Laser B."/>
            <person name="Kueck U."/>
        </authorList>
    </citation>
    <scope>NUCLEOTIDE SEQUENCE [GENOMIC DNA]</scope>
</reference>